<sequence>MERLMRLTILLFLGAVLAGCASVPSTSAPQAIGTVERPVPSNLPKPSPGMDPDVLLREFLKATADPANRHLAARQFLTESASNAWDDAGSALLIDHVVFVETRSAEKVSVTMRADILGSLSDVGVFETAEGQLPDPGPIELVKTSDGWRIDRLPNGVFLDWQQFQETYKRNTLYFADPTGKTVVPDPRYVAVSDRDQLATELVSKLLAGPRPEMARTVRNLLAPPLRLRGPVTRADGGKSGIGRGYGGARVDMEKLSTTDPHSRQLLAAQIIWTLARADIRGPYVINADGAPLEDRFAEGWTTSDVAATDPGVADGAAAGLHALVNGSLVAMDAQRVTPVPGAFGRMPEQTAAAVSRSGRQVASVVTLGRGAPDEAASLWVGDLGGEAVQSADGHSLSRPSWSLDDAVWVVVDTNVVLRAIQDPASGQPARIPVDSTAVASRFPGAINDLQLSRDGTRAAMVIGGQVILAGVEQTQAGQFALTYPRRLGFGLGSSVVSLSWRTGDDIVVTRTDAAHPVSYVNLDGVNSDAPSRGLQTPLTAIAANPSTVYVAGPQGVLMYSASVESRPGWADVPGLMVPGAAPVLPG</sequence>
<accession>P9WK36</accession>
<accession>L0TC87</accession>
<accession>O05889</accession>
<accession>Q7D5U9</accession>
<gene>
    <name evidence="2" type="primary">lpqB</name>
    <name type="ordered locus">MT3342</name>
</gene>
<protein>
    <recommendedName>
        <fullName evidence="2">Lipoprotein LpqB</fullName>
    </recommendedName>
</protein>
<name>LPQB_MYCTO</name>
<dbReference type="EMBL" id="AE000516">
    <property type="protein sequence ID" value="AAK47684.1"/>
    <property type="molecule type" value="Genomic_DNA"/>
</dbReference>
<dbReference type="PIR" id="F70592">
    <property type="entry name" value="F70592"/>
</dbReference>
<dbReference type="SMR" id="P9WK36"/>
<dbReference type="KEGG" id="mtc:MT3342"/>
<dbReference type="HOGENOM" id="CLU_032207_1_0_11"/>
<dbReference type="Proteomes" id="UP000001020">
    <property type="component" value="Chromosome"/>
</dbReference>
<dbReference type="GO" id="GO:0005576">
    <property type="term" value="C:extracellular region"/>
    <property type="evidence" value="ECO:0007669"/>
    <property type="project" value="UniProtKB-KW"/>
</dbReference>
<dbReference type="GO" id="GO:0005886">
    <property type="term" value="C:plasma membrane"/>
    <property type="evidence" value="ECO:0007669"/>
    <property type="project" value="UniProtKB-SubCell"/>
</dbReference>
<dbReference type="HAMAP" id="MF_01373">
    <property type="entry name" value="LpqB_lipoprot"/>
    <property type="match status" value="1"/>
</dbReference>
<dbReference type="InterPro" id="IPR019606">
    <property type="entry name" value="GerMN"/>
</dbReference>
<dbReference type="InterPro" id="IPR023959">
    <property type="entry name" value="Lipoprotein_LpqB"/>
</dbReference>
<dbReference type="InterPro" id="IPR018910">
    <property type="entry name" value="Lipoprotein_LpqB_C"/>
</dbReference>
<dbReference type="NCBIfam" id="NF010141">
    <property type="entry name" value="PRK13616.1"/>
    <property type="match status" value="1"/>
</dbReference>
<dbReference type="Pfam" id="PF10646">
    <property type="entry name" value="Germane"/>
    <property type="match status" value="1"/>
</dbReference>
<dbReference type="Pfam" id="PF10647">
    <property type="entry name" value="Gmad1"/>
    <property type="match status" value="1"/>
</dbReference>
<dbReference type="SMART" id="SM00909">
    <property type="entry name" value="Germane"/>
    <property type="match status" value="1"/>
</dbReference>
<dbReference type="SUPFAM" id="SSF69304">
    <property type="entry name" value="Tricorn protease N-terminal domain"/>
    <property type="match status" value="1"/>
</dbReference>
<dbReference type="PROSITE" id="PS51257">
    <property type="entry name" value="PROKAR_LIPOPROTEIN"/>
    <property type="match status" value="1"/>
</dbReference>
<comment type="function">
    <text evidence="1">May modulate activity of the MtrAB system in controlling homeostasis of the cell wall and cell division.</text>
</comment>
<comment type="subunit">
    <text evidence="1">Interacts with MtrB, probably extracytoplasmically.</text>
</comment>
<comment type="subcellular location">
    <subcellularLocation>
        <location evidence="2">Cell membrane</location>
        <topology evidence="2">Lipid-anchor</topology>
    </subcellularLocation>
    <subcellularLocation>
        <location evidence="1">Secreted</location>
        <location evidence="1">Cell wall</location>
    </subcellularLocation>
</comment>
<comment type="similarity">
    <text evidence="2">Belongs to the LpqB lipoprotein family.</text>
</comment>
<feature type="signal peptide" evidence="2">
    <location>
        <begin position="1"/>
        <end position="19"/>
    </location>
</feature>
<feature type="chain" id="PRO_0000427722" description="Lipoprotein LpqB">
    <location>
        <begin position="20"/>
        <end position="587"/>
    </location>
</feature>
<feature type="lipid moiety-binding region" description="N-palmitoyl cysteine" evidence="2">
    <location>
        <position position="20"/>
    </location>
</feature>
<feature type="lipid moiety-binding region" description="S-diacylglycerol cysteine" evidence="2">
    <location>
        <position position="20"/>
    </location>
</feature>
<proteinExistence type="inferred from homology"/>
<reference key="1">
    <citation type="journal article" date="2002" name="J. Bacteriol.">
        <title>Whole-genome comparison of Mycobacterium tuberculosis clinical and laboratory strains.</title>
        <authorList>
            <person name="Fleischmann R.D."/>
            <person name="Alland D."/>
            <person name="Eisen J.A."/>
            <person name="Carpenter L."/>
            <person name="White O."/>
            <person name="Peterson J.D."/>
            <person name="DeBoy R.T."/>
            <person name="Dodson R.J."/>
            <person name="Gwinn M.L."/>
            <person name="Haft D.H."/>
            <person name="Hickey E.K."/>
            <person name="Kolonay J.F."/>
            <person name="Nelson W.C."/>
            <person name="Umayam L.A."/>
            <person name="Ermolaeva M.D."/>
            <person name="Salzberg S.L."/>
            <person name="Delcher A."/>
            <person name="Utterback T.R."/>
            <person name="Weidman J.F."/>
            <person name="Khouri H.M."/>
            <person name="Gill J."/>
            <person name="Mikula A."/>
            <person name="Bishai W."/>
            <person name="Jacobs W.R. Jr."/>
            <person name="Venter J.C."/>
            <person name="Fraser C.M."/>
        </authorList>
    </citation>
    <scope>NUCLEOTIDE SEQUENCE [LARGE SCALE GENOMIC DNA]</scope>
    <source>
        <strain>CDC 1551 / Oshkosh</strain>
    </source>
</reference>
<keyword id="KW-1003">Cell membrane</keyword>
<keyword id="KW-0134">Cell wall</keyword>
<keyword id="KW-0449">Lipoprotein</keyword>
<keyword id="KW-0472">Membrane</keyword>
<keyword id="KW-0564">Palmitate</keyword>
<keyword id="KW-1185">Reference proteome</keyword>
<keyword id="KW-0964">Secreted</keyword>
<keyword id="KW-0732">Signal</keyword>
<evidence type="ECO:0000250" key="1"/>
<evidence type="ECO:0000255" key="2">
    <source>
        <dbReference type="HAMAP-Rule" id="MF_01373"/>
    </source>
</evidence>
<organism>
    <name type="scientific">Mycobacterium tuberculosis (strain CDC 1551 / Oshkosh)</name>
    <dbReference type="NCBI Taxonomy" id="83331"/>
    <lineage>
        <taxon>Bacteria</taxon>
        <taxon>Bacillati</taxon>
        <taxon>Actinomycetota</taxon>
        <taxon>Actinomycetes</taxon>
        <taxon>Mycobacteriales</taxon>
        <taxon>Mycobacteriaceae</taxon>
        <taxon>Mycobacterium</taxon>
        <taxon>Mycobacterium tuberculosis complex</taxon>
    </lineage>
</organism>